<reference key="1">
    <citation type="submission" date="2007-04" db="EMBL/GenBank/DDBJ databases">
        <title>Complete sequence of Pyrobaculum arsenaticum DSM 13514.</title>
        <authorList>
            <consortium name="US DOE Joint Genome Institute"/>
            <person name="Copeland A."/>
            <person name="Lucas S."/>
            <person name="Lapidus A."/>
            <person name="Barry K."/>
            <person name="Glavina del Rio T."/>
            <person name="Dalin E."/>
            <person name="Tice H."/>
            <person name="Pitluck S."/>
            <person name="Chain P."/>
            <person name="Malfatti S."/>
            <person name="Shin M."/>
            <person name="Vergez L."/>
            <person name="Schmutz J."/>
            <person name="Larimer F."/>
            <person name="Land M."/>
            <person name="Hauser L."/>
            <person name="Kyrpides N."/>
            <person name="Mikhailova N."/>
            <person name="Cozen A.E."/>
            <person name="Fitz-Gibbon S.T."/>
            <person name="House C.H."/>
            <person name="Saltikov C."/>
            <person name="Lowe T.M."/>
            <person name="Richardson P."/>
        </authorList>
    </citation>
    <scope>NUCLEOTIDE SEQUENCE [LARGE SCALE GENOMIC DNA]</scope>
    <source>
        <strain>ATCC 700994 / DSM 13514 / JCM 11321 / PZ6</strain>
    </source>
</reference>
<keyword id="KW-0687">Ribonucleoprotein</keyword>
<keyword id="KW-0689">Ribosomal protein</keyword>
<proteinExistence type="inferred from homology"/>
<gene>
    <name evidence="1" type="primary">rps8e</name>
    <name type="ordered locus">Pars_1745</name>
</gene>
<comment type="subunit">
    <text evidence="1">Part of the 30S ribosomal subunit.</text>
</comment>
<comment type="similarity">
    <text evidence="1">Belongs to the eukaryotic ribosomal protein eS8 family.</text>
</comment>
<protein>
    <recommendedName>
        <fullName evidence="1">Small ribosomal subunit protein eS8</fullName>
    </recommendedName>
    <alternativeName>
        <fullName evidence="3">30S ribosomal protein S8e</fullName>
    </alternativeName>
</protein>
<organism>
    <name type="scientific">Pyrobaculum arsenaticum (strain DSM 13514 / JCM 11321 / PZ6)</name>
    <dbReference type="NCBI Taxonomy" id="340102"/>
    <lineage>
        <taxon>Archaea</taxon>
        <taxon>Thermoproteota</taxon>
        <taxon>Thermoprotei</taxon>
        <taxon>Thermoproteales</taxon>
        <taxon>Thermoproteaceae</taxon>
        <taxon>Pyrobaculum</taxon>
    </lineage>
</organism>
<feature type="chain" id="PRO_0000304177" description="Small ribosomal subunit protein eS8">
    <location>
        <begin position="1"/>
        <end position="131"/>
    </location>
</feature>
<feature type="region of interest" description="Disordered" evidence="2">
    <location>
        <begin position="1"/>
        <end position="38"/>
    </location>
</feature>
<feature type="compositionally biased region" description="Basic residues" evidence="2">
    <location>
        <begin position="16"/>
        <end position="30"/>
    </location>
</feature>
<accession>A4WLM9</accession>
<sequence length="131" mass="14513">MKLGAYYKGGDLKKPSGGKKRKVRRTKKKALGGGPPQIPKLGEEDVRIVERVRGGNIKVRLREAKYANVYIPKEKRYVKAKILSIVETPANPDFARRNYMVKGAVIRTEVGKAVITSQPGQDGIINAILIE</sequence>
<evidence type="ECO:0000255" key="1">
    <source>
        <dbReference type="HAMAP-Rule" id="MF_00029"/>
    </source>
</evidence>
<evidence type="ECO:0000256" key="2">
    <source>
        <dbReference type="SAM" id="MobiDB-lite"/>
    </source>
</evidence>
<evidence type="ECO:0000305" key="3"/>
<dbReference type="EMBL" id="CP000660">
    <property type="protein sequence ID" value="ABP51296.1"/>
    <property type="molecule type" value="Genomic_DNA"/>
</dbReference>
<dbReference type="SMR" id="A4WLM9"/>
<dbReference type="STRING" id="340102.Pars_1745"/>
<dbReference type="KEGG" id="pas:Pars_1745"/>
<dbReference type="HOGENOM" id="CLU_080597_2_1_2"/>
<dbReference type="OrthoDB" id="372305at2157"/>
<dbReference type="PhylomeDB" id="A4WLM9"/>
<dbReference type="Proteomes" id="UP000001567">
    <property type="component" value="Chromosome"/>
</dbReference>
<dbReference type="GO" id="GO:1990904">
    <property type="term" value="C:ribonucleoprotein complex"/>
    <property type="evidence" value="ECO:0007669"/>
    <property type="project" value="UniProtKB-KW"/>
</dbReference>
<dbReference type="GO" id="GO:0005840">
    <property type="term" value="C:ribosome"/>
    <property type="evidence" value="ECO:0007669"/>
    <property type="project" value="UniProtKB-KW"/>
</dbReference>
<dbReference type="GO" id="GO:0003735">
    <property type="term" value="F:structural constituent of ribosome"/>
    <property type="evidence" value="ECO:0007669"/>
    <property type="project" value="InterPro"/>
</dbReference>
<dbReference type="GO" id="GO:0006412">
    <property type="term" value="P:translation"/>
    <property type="evidence" value="ECO:0007669"/>
    <property type="project" value="UniProtKB-UniRule"/>
</dbReference>
<dbReference type="CDD" id="cd11382">
    <property type="entry name" value="Ribosomal_S8e"/>
    <property type="match status" value="1"/>
</dbReference>
<dbReference type="Gene3D" id="2.40.10.310">
    <property type="match status" value="1"/>
</dbReference>
<dbReference type="HAMAP" id="MF_00029">
    <property type="entry name" value="Ribosomal_eS8"/>
    <property type="match status" value="1"/>
</dbReference>
<dbReference type="InterPro" id="IPR001047">
    <property type="entry name" value="Ribosomal_eS8"/>
</dbReference>
<dbReference type="InterPro" id="IPR018283">
    <property type="entry name" value="Ribosomal_eS8_CS"/>
</dbReference>
<dbReference type="InterPro" id="IPR020919">
    <property type="entry name" value="Ribosomal_protein_eS8_arc"/>
</dbReference>
<dbReference type="InterPro" id="IPR022309">
    <property type="entry name" value="Ribosomal_Se8/biogenesis_NSA2"/>
</dbReference>
<dbReference type="NCBIfam" id="TIGR00307">
    <property type="entry name" value="eS8"/>
    <property type="match status" value="1"/>
</dbReference>
<dbReference type="PANTHER" id="PTHR10394">
    <property type="entry name" value="40S RIBOSOMAL PROTEIN S8"/>
    <property type="match status" value="1"/>
</dbReference>
<dbReference type="Pfam" id="PF01201">
    <property type="entry name" value="Ribosomal_S8e"/>
    <property type="match status" value="1"/>
</dbReference>
<dbReference type="PROSITE" id="PS01193">
    <property type="entry name" value="RIBOSOMAL_S8E"/>
    <property type="match status" value="1"/>
</dbReference>
<name>RS8E_PYRAR</name>